<protein>
    <recommendedName>
        <fullName>FACT complex subunit spt16</fullName>
    </recommendedName>
    <alternativeName>
        <fullName>Facilitates chromatin transcription complex subunit spt16</fullName>
    </alternativeName>
</protein>
<evidence type="ECO:0000250" key="1"/>
<evidence type="ECO:0000255" key="2"/>
<evidence type="ECO:0000256" key="3">
    <source>
        <dbReference type="SAM" id="MobiDB-lite"/>
    </source>
</evidence>
<evidence type="ECO:0000305" key="4"/>
<name>SPT16_ASPOR</name>
<gene>
    <name type="primary">spt16</name>
    <name type="ORF">AO090012001024</name>
</gene>
<sequence length="1042" mass="117534">MAEEIVIDKSAFFNRLSSFFAAWKADKRPGHAVFGGVGSIVILMGKTDEANSFQKNNAMHFWLLGYEFPATLMVFTTDMMYVVTTAKKGEDWPNTDSAYLSANTGLLNVAKHLEPLKGGKIPVEILVTSKDPDEKSRSFEKCLEVIKNAGKRVGVLPKDTAAGPFAEDWKRAFANITQDVEEVDISPALSSAAFSVKDTDELVAIRNASRACSGLMSEYFVDEMSRLLDEEKQMTHKALSMRIDAKIDDAKFFKKLAKLPAEFDPQQIDWAYGPVIQSGGKYDLRLTATSDNSHLQAGIIVAGFGIRYKTYSSIIARTYLVDPSKSQEANYAFLLNLHDTVMKDVRDGTMAKDLFNKAIGLVRAKKPELESHFVKSVGAGIGIELRDSNMVLNGKNNKILKSGMTLSITVGLTDVEELESKDKNTAVYSMIITDTVRVGENGPHIFTKDAGIDMDSVSFYFGDEEEPQKPAKEKKEVKSNAMTSRNVTRTKLRAERPTQVNEGAEARRREHQKELATKKTKEGLDRFAGTTGDDNGVTQKKFKRFESYKRDNQLPTKVKDLTIYVDHKASTVIVPIMGRPVPFHINTIKNASKSDEGEYAYLRINFLSPGQGVGRKDDQPFEDISAHFLRNLTLRSKDNERLAQVAQDITELRKNALRREQEKKEMEDVVEQDKLVEIRNRRPVRLPDVYLRPPLDGKRVPGEVEIHQNGLRYMSPFRNEHVDVLFSNVKHLFFQPCAHELIVLIHVHLKTPIMIGKRKTRDVQFYREATEMQFDETGNRRRKHRYGDEEEFEAEQEERRRRAALDREFKAFAEKIADAGKDEGVDVDIPFREIGFTGVPNRSNVLIQPTTDALVQLTEPPFLVITLNEIEIAHLERVQFGLKNFDLVFVFKDFHRPPVHVNTIPVESLEGVKDWLDSVDIAFTEGPLNLNWTTIMKTVVSDPYGFFADGGWSFLAAESDSEGGASDEEESAFELSESELAAADESSEDDSEFDDDASAEASEDFSADEDSGEDWDELERKAKKKDRESGLDDEERGKKRKR</sequence>
<feature type="chain" id="PRO_0000245180" description="FACT complex subunit spt16">
    <location>
        <begin position="1"/>
        <end position="1042"/>
    </location>
</feature>
<feature type="region of interest" description="Disordered" evidence="3">
    <location>
        <begin position="464"/>
        <end position="519"/>
    </location>
</feature>
<feature type="region of interest" description="Disordered" evidence="3">
    <location>
        <begin position="776"/>
        <end position="795"/>
    </location>
</feature>
<feature type="region of interest" description="Disordered" evidence="3">
    <location>
        <begin position="958"/>
        <end position="1042"/>
    </location>
</feature>
<feature type="coiled-coil region" evidence="2">
    <location>
        <begin position="498"/>
        <end position="522"/>
    </location>
</feature>
<feature type="coiled-coil region" evidence="2">
    <location>
        <begin position="636"/>
        <end position="672"/>
    </location>
</feature>
<feature type="coiled-coil region" evidence="2">
    <location>
        <begin position="796"/>
        <end position="819"/>
    </location>
</feature>
<feature type="compositionally biased region" description="Basic and acidic residues" evidence="3">
    <location>
        <begin position="467"/>
        <end position="478"/>
    </location>
</feature>
<feature type="compositionally biased region" description="Polar residues" evidence="3">
    <location>
        <begin position="480"/>
        <end position="489"/>
    </location>
</feature>
<feature type="compositionally biased region" description="Basic and acidic residues" evidence="3">
    <location>
        <begin position="504"/>
        <end position="519"/>
    </location>
</feature>
<feature type="compositionally biased region" description="Acidic residues" evidence="3">
    <location>
        <begin position="959"/>
        <end position="972"/>
    </location>
</feature>
<feature type="compositionally biased region" description="Low complexity" evidence="3">
    <location>
        <begin position="973"/>
        <end position="984"/>
    </location>
</feature>
<feature type="compositionally biased region" description="Acidic residues" evidence="3">
    <location>
        <begin position="985"/>
        <end position="1017"/>
    </location>
</feature>
<comment type="function">
    <text evidence="1">Component of the FACT complex, a general chromatin factor that acts to reorganize nucleosomes. The FACT complex is involved in multiple processes that require DNA as a template such as mRNA elongation, DNA replication and DNA repair. During transcription elongation the FACT complex acts as a histone chaperone that both destabilizes and restores nucleosomal structure. It facilitates the passage of RNA polymerase II and transcription by promoting the dissociation of one histone H2A-H2B dimer from the nucleosome, then subsequently promotes the reestablishment of the nucleosome following the passage of RNA polymerase II (By similarity).</text>
</comment>
<comment type="subunit">
    <text evidence="1">Forms a stable heterodimer with pob3. The spt16-pob3 dimer weakly associates with multiple molecules of nhp6 to form the FACT complex (By similarity).</text>
</comment>
<comment type="subcellular location">
    <subcellularLocation>
        <location evidence="1">Nucleus</location>
    </subcellularLocation>
    <subcellularLocation>
        <location evidence="1">Chromosome</location>
    </subcellularLocation>
</comment>
<comment type="similarity">
    <text evidence="4">Belongs to the peptidase M24 family. SPT16 subfamily.</text>
</comment>
<comment type="caution">
    <text evidence="4">Although related to the peptidase M24 family, this protein lacks conserved active site residues suggesting that it may lack peptidase activity.</text>
</comment>
<accession>Q2UBF1</accession>
<dbReference type="EMBL" id="BA000052">
    <property type="protein sequence ID" value="BAE61114.1"/>
    <property type="molecule type" value="Genomic_DNA"/>
</dbReference>
<dbReference type="SMR" id="Q2UBF1"/>
<dbReference type="STRING" id="510516.Q2UBF1"/>
<dbReference type="EnsemblFungi" id="BAE61114">
    <property type="protein sequence ID" value="BAE61114"/>
    <property type="gene ID" value="AO090012001024"/>
</dbReference>
<dbReference type="HOGENOM" id="CLU_004627_1_0_1"/>
<dbReference type="OMA" id="YHINTIP"/>
<dbReference type="Proteomes" id="UP000006564">
    <property type="component" value="Chromosome 4"/>
</dbReference>
<dbReference type="GO" id="GO:0035101">
    <property type="term" value="C:FACT complex"/>
    <property type="evidence" value="ECO:0007669"/>
    <property type="project" value="EnsemblFungi"/>
</dbReference>
<dbReference type="GO" id="GO:0042393">
    <property type="term" value="F:histone binding"/>
    <property type="evidence" value="ECO:0007669"/>
    <property type="project" value="EnsemblFungi"/>
</dbReference>
<dbReference type="GO" id="GO:0140713">
    <property type="term" value="F:histone chaperone activity"/>
    <property type="evidence" value="ECO:0007669"/>
    <property type="project" value="EnsemblFungi"/>
</dbReference>
<dbReference type="GO" id="GO:0031491">
    <property type="term" value="F:nucleosome binding"/>
    <property type="evidence" value="ECO:0007669"/>
    <property type="project" value="EnsemblFungi"/>
</dbReference>
<dbReference type="GO" id="GO:0140719">
    <property type="term" value="P:constitutive heterochromatin formation"/>
    <property type="evidence" value="ECO:0007669"/>
    <property type="project" value="EnsemblFungi"/>
</dbReference>
<dbReference type="GO" id="GO:0006281">
    <property type="term" value="P:DNA repair"/>
    <property type="evidence" value="ECO:0007669"/>
    <property type="project" value="UniProtKB-KW"/>
</dbReference>
<dbReference type="GO" id="GO:0006261">
    <property type="term" value="P:DNA-templated DNA replication"/>
    <property type="evidence" value="ECO:0007669"/>
    <property type="project" value="EnsemblFungi"/>
</dbReference>
<dbReference type="GO" id="GO:0006334">
    <property type="term" value="P:nucleosome assembly"/>
    <property type="evidence" value="ECO:0007669"/>
    <property type="project" value="EnsemblFungi"/>
</dbReference>
<dbReference type="GO" id="GO:0045899">
    <property type="term" value="P:positive regulation of RNA polymerase II transcription preinitiation complex assembly"/>
    <property type="evidence" value="ECO:0007669"/>
    <property type="project" value="EnsemblFungi"/>
</dbReference>
<dbReference type="GO" id="GO:0007063">
    <property type="term" value="P:regulation of sister chromatid cohesion"/>
    <property type="evidence" value="ECO:0007669"/>
    <property type="project" value="EnsemblFungi"/>
</dbReference>
<dbReference type="GO" id="GO:0006368">
    <property type="term" value="P:transcription elongation by RNA polymerase II"/>
    <property type="evidence" value="ECO:0007669"/>
    <property type="project" value="TreeGrafter"/>
</dbReference>
<dbReference type="FunFam" id="2.30.29.150:FF:000002">
    <property type="entry name" value="FACT complex subunit SPT16"/>
    <property type="match status" value="1"/>
</dbReference>
<dbReference type="FunFam" id="2.30.29.30:FF:000017">
    <property type="entry name" value="FACT complex subunit SPT16"/>
    <property type="match status" value="1"/>
</dbReference>
<dbReference type="FunFam" id="3.40.350.10:FF:000006">
    <property type="entry name" value="FACT complex subunit SPT16"/>
    <property type="match status" value="1"/>
</dbReference>
<dbReference type="FunFam" id="2.30.29.210:FF:000001">
    <property type="entry name" value="FACT complex subunit spt16"/>
    <property type="match status" value="1"/>
</dbReference>
<dbReference type="FunFam" id="3.90.230.10:FF:000005">
    <property type="entry name" value="FACT complex subunit spt16"/>
    <property type="match status" value="1"/>
</dbReference>
<dbReference type="Gene3D" id="2.30.29.150">
    <property type="match status" value="1"/>
</dbReference>
<dbReference type="Gene3D" id="3.90.230.10">
    <property type="entry name" value="Creatinase/methionine aminopeptidase superfamily"/>
    <property type="match status" value="1"/>
</dbReference>
<dbReference type="Gene3D" id="3.40.350.10">
    <property type="entry name" value="Creatinase/prolidase N-terminal domain"/>
    <property type="match status" value="1"/>
</dbReference>
<dbReference type="Gene3D" id="2.30.29.210">
    <property type="entry name" value="FACT complex subunit Spt16p/Cdc68p"/>
    <property type="match status" value="1"/>
</dbReference>
<dbReference type="Gene3D" id="2.30.29.30">
    <property type="entry name" value="Pleckstrin-homology domain (PH domain)/Phosphotyrosine-binding domain (PTB)"/>
    <property type="match status" value="1"/>
</dbReference>
<dbReference type="InterPro" id="IPR029149">
    <property type="entry name" value="Creatin/AminoP/Spt16_N"/>
</dbReference>
<dbReference type="InterPro" id="IPR036005">
    <property type="entry name" value="Creatinase/aminopeptidase-like"/>
</dbReference>
<dbReference type="InterPro" id="IPR029148">
    <property type="entry name" value="FACT-SPT16_Nlobe"/>
</dbReference>
<dbReference type="InterPro" id="IPR056595">
    <property type="entry name" value="Fact-SPT16_PH"/>
</dbReference>
<dbReference type="InterPro" id="IPR048969">
    <property type="entry name" value="FACT_SPT16_C"/>
</dbReference>
<dbReference type="InterPro" id="IPR013953">
    <property type="entry name" value="FACT_SPT16_M"/>
</dbReference>
<dbReference type="InterPro" id="IPR000994">
    <property type="entry name" value="Pept_M24"/>
</dbReference>
<dbReference type="InterPro" id="IPR011993">
    <property type="entry name" value="PH-like_dom_sf"/>
</dbReference>
<dbReference type="InterPro" id="IPR013719">
    <property type="entry name" value="RTT106/SPT16-like_middle_dom"/>
</dbReference>
<dbReference type="InterPro" id="IPR040258">
    <property type="entry name" value="Spt16"/>
</dbReference>
<dbReference type="PANTHER" id="PTHR13980">
    <property type="entry name" value="CDC68 RELATED"/>
    <property type="match status" value="1"/>
</dbReference>
<dbReference type="PANTHER" id="PTHR13980:SF15">
    <property type="entry name" value="FACT COMPLEX SUBUNIT SPT16"/>
    <property type="match status" value="1"/>
</dbReference>
<dbReference type="Pfam" id="PF14826">
    <property type="entry name" value="FACT-Spt16_Nlob"/>
    <property type="match status" value="2"/>
</dbReference>
<dbReference type="Pfam" id="PF00557">
    <property type="entry name" value="Peptidase_M24"/>
    <property type="match status" value="1"/>
</dbReference>
<dbReference type="Pfam" id="PF24824">
    <property type="entry name" value="PH_SPT16"/>
    <property type="match status" value="1"/>
</dbReference>
<dbReference type="Pfam" id="PF08512">
    <property type="entry name" value="Rttp106-like_middle"/>
    <property type="match status" value="1"/>
</dbReference>
<dbReference type="Pfam" id="PF08644">
    <property type="entry name" value="SPT16"/>
    <property type="match status" value="1"/>
</dbReference>
<dbReference type="Pfam" id="PF21091">
    <property type="entry name" value="SPT16_C"/>
    <property type="match status" value="1"/>
</dbReference>
<dbReference type="SMART" id="SM01285">
    <property type="entry name" value="FACT-Spt16_Nlob"/>
    <property type="match status" value="1"/>
</dbReference>
<dbReference type="SMART" id="SM01287">
    <property type="entry name" value="Rtt106"/>
    <property type="match status" value="1"/>
</dbReference>
<dbReference type="SMART" id="SM01286">
    <property type="entry name" value="SPT16"/>
    <property type="match status" value="1"/>
</dbReference>
<dbReference type="SUPFAM" id="SSF55920">
    <property type="entry name" value="Creatinase/aminopeptidase"/>
    <property type="match status" value="1"/>
</dbReference>
<organism>
    <name type="scientific">Aspergillus oryzae (strain ATCC 42149 / RIB 40)</name>
    <name type="common">Yellow koji mold</name>
    <dbReference type="NCBI Taxonomy" id="510516"/>
    <lineage>
        <taxon>Eukaryota</taxon>
        <taxon>Fungi</taxon>
        <taxon>Dikarya</taxon>
        <taxon>Ascomycota</taxon>
        <taxon>Pezizomycotina</taxon>
        <taxon>Eurotiomycetes</taxon>
        <taxon>Eurotiomycetidae</taxon>
        <taxon>Eurotiales</taxon>
        <taxon>Aspergillaceae</taxon>
        <taxon>Aspergillus</taxon>
        <taxon>Aspergillus subgen. Circumdati</taxon>
    </lineage>
</organism>
<reference key="1">
    <citation type="journal article" date="2005" name="Nature">
        <title>Genome sequencing and analysis of Aspergillus oryzae.</title>
        <authorList>
            <person name="Machida M."/>
            <person name="Asai K."/>
            <person name="Sano M."/>
            <person name="Tanaka T."/>
            <person name="Kumagai T."/>
            <person name="Terai G."/>
            <person name="Kusumoto K."/>
            <person name="Arima T."/>
            <person name="Akita O."/>
            <person name="Kashiwagi Y."/>
            <person name="Abe K."/>
            <person name="Gomi K."/>
            <person name="Horiuchi H."/>
            <person name="Kitamoto K."/>
            <person name="Kobayashi T."/>
            <person name="Takeuchi M."/>
            <person name="Denning D.W."/>
            <person name="Galagan J.E."/>
            <person name="Nierman W.C."/>
            <person name="Yu J."/>
            <person name="Archer D.B."/>
            <person name="Bennett J.W."/>
            <person name="Bhatnagar D."/>
            <person name="Cleveland T.E."/>
            <person name="Fedorova N.D."/>
            <person name="Gotoh O."/>
            <person name="Horikawa H."/>
            <person name="Hosoyama A."/>
            <person name="Ichinomiya M."/>
            <person name="Igarashi R."/>
            <person name="Iwashita K."/>
            <person name="Juvvadi P.R."/>
            <person name="Kato M."/>
            <person name="Kato Y."/>
            <person name="Kin T."/>
            <person name="Kokubun A."/>
            <person name="Maeda H."/>
            <person name="Maeyama N."/>
            <person name="Maruyama J."/>
            <person name="Nagasaki H."/>
            <person name="Nakajima T."/>
            <person name="Oda K."/>
            <person name="Okada K."/>
            <person name="Paulsen I."/>
            <person name="Sakamoto K."/>
            <person name="Sawano T."/>
            <person name="Takahashi M."/>
            <person name="Takase K."/>
            <person name="Terabayashi Y."/>
            <person name="Wortman J.R."/>
            <person name="Yamada O."/>
            <person name="Yamagata Y."/>
            <person name="Anazawa H."/>
            <person name="Hata Y."/>
            <person name="Koide Y."/>
            <person name="Komori T."/>
            <person name="Koyama Y."/>
            <person name="Minetoki T."/>
            <person name="Suharnan S."/>
            <person name="Tanaka A."/>
            <person name="Isono K."/>
            <person name="Kuhara S."/>
            <person name="Ogasawara N."/>
            <person name="Kikuchi H."/>
        </authorList>
    </citation>
    <scope>NUCLEOTIDE SEQUENCE [LARGE SCALE GENOMIC DNA]</scope>
    <source>
        <strain>ATCC 42149 / RIB 40</strain>
    </source>
</reference>
<proteinExistence type="inferred from homology"/>
<keyword id="KW-0158">Chromosome</keyword>
<keyword id="KW-0175">Coiled coil</keyword>
<keyword id="KW-0227">DNA damage</keyword>
<keyword id="KW-0234">DNA repair</keyword>
<keyword id="KW-0235">DNA replication</keyword>
<keyword id="KW-0539">Nucleus</keyword>
<keyword id="KW-1185">Reference proteome</keyword>
<keyword id="KW-0804">Transcription</keyword>
<keyword id="KW-0805">Transcription regulation</keyword>